<gene>
    <name evidence="1" type="primary">VAPA</name>
</gene>
<accession>Q5R601</accession>
<evidence type="ECO:0000250" key="1">
    <source>
        <dbReference type="UniProtKB" id="Q9P0L0"/>
    </source>
</evidence>
<evidence type="ECO:0000250" key="2">
    <source>
        <dbReference type="UniProtKB" id="Q9Z270"/>
    </source>
</evidence>
<evidence type="ECO:0000255" key="3"/>
<evidence type="ECO:0000255" key="4">
    <source>
        <dbReference type="PROSITE-ProRule" id="PRU00132"/>
    </source>
</evidence>
<evidence type="ECO:0000256" key="5">
    <source>
        <dbReference type="SAM" id="MobiDB-lite"/>
    </source>
</evidence>
<evidence type="ECO:0000305" key="6"/>
<organism>
    <name type="scientific">Pongo abelii</name>
    <name type="common">Sumatran orangutan</name>
    <name type="synonym">Pongo pygmaeus abelii</name>
    <dbReference type="NCBI Taxonomy" id="9601"/>
    <lineage>
        <taxon>Eukaryota</taxon>
        <taxon>Metazoa</taxon>
        <taxon>Chordata</taxon>
        <taxon>Craniata</taxon>
        <taxon>Vertebrata</taxon>
        <taxon>Euteleostomi</taxon>
        <taxon>Mammalia</taxon>
        <taxon>Eutheria</taxon>
        <taxon>Euarchontoglires</taxon>
        <taxon>Primates</taxon>
        <taxon>Haplorrhini</taxon>
        <taxon>Catarrhini</taxon>
        <taxon>Hominidae</taxon>
        <taxon>Pongo</taxon>
    </lineage>
</organism>
<proteinExistence type="evidence at transcript level"/>
<comment type="function">
    <text evidence="1">Endoplasmic reticulum (ER)-anchored protein that mediates the formation of contact sites between the ER and endosomes via interaction with FFAT motif-containing proteins such as STARD3 or WDR44. STARD3-VAPA interaction enables cholesterol transfer from the ER to endosomes. Via interaction with WDR44 participates in neosynthesized protein export. In addition, recruited to the plasma membrane through OSBPL3 binding. The OSBPL3-VAPA complex stimulates RRAS signaling which in turn attenuates integrin beta-1 (ITGB1) activation at the cell surface. With OSBPL3, may regulate ER morphology. May play a role in vesicle trafficking.</text>
</comment>
<comment type="subunit">
    <text evidence="1">Homodimer; disulfide-linked. Heterodimer with VAPB. Interacts with VAMP1, VAMP2, STX1A, BET1, SEC22C and with the C-terminal domain of OCLN. Interacts (via MSP domain) with OSBPL1A (via FFAT motif). Interacts (via MSP domain) with ZFYVE27; may retain ZFYVE27 in the endoplasmic reticulum and regulate its function in cell projections formation. Interacts with OSBP. Interacts (via C-terminus) with RSAD2/viperin (via C-terminus). Interacts with IFITM3. Interacts with OSBPL3 (phosphorylated form). Interacts with KIF5A in a ZFYVE27-dependent manner. Interacts (via MSP domain) with STARD3 (via phosphorylated FFAT motif); this interaction recruits VAPA to the endosome. Interacts with STARD3NL (via FFAT motif). Interacts with CERT1. Interacts with PLEKHA3 and SACM1L to form a ternary complex. Interacts with VPS13A (via FFAT motif). Interacts with RB1CC1 (via phosphorylated FFAT motif), MIGA2 (via phosphorylated FFAT motif), RMDN3 (via phosphorylated FFAT motif), KCNB1 (via phosphorylated FFAT motif) and KCNB2 (via phosphorylated FFAT motif). Interacts (via MSP domain) with WDR44 (via FFAT-like motif); the interactions connect the endoplasmic reticulum (ER) with the endosomal tubule (By similarity).</text>
</comment>
<comment type="subcellular location">
    <subcellularLocation>
        <location evidence="1">Endoplasmic reticulum membrane</location>
        <topology evidence="1">Single-pass type IV membrane protein</topology>
    </subcellularLocation>
    <subcellularLocation>
        <location evidence="1">Cell membrane</location>
        <topology evidence="6">Single-pass type IV membrane protein</topology>
    </subcellularLocation>
    <subcellularLocation>
        <location evidence="1">Cell junction</location>
        <location evidence="1">Tight junction</location>
    </subcellularLocation>
    <subcellularLocation>
        <location evidence="2">Nucleus membrane</location>
    </subcellularLocation>
    <text evidence="1">Present in the plasma membrane and in intracellular vesicles, together with SNARE proteins. May also associate with the cytoskeleton. Colocalizes with OCLN at the tight junction in polarized epithelial cells.</text>
</comment>
<comment type="domain">
    <text evidence="1">The MSP domain binds the FFAT motif of many proteins.</text>
</comment>
<comment type="similarity">
    <text evidence="6">Belongs to the VAMP-associated protein (VAP) (TC 9.B.17) family.</text>
</comment>
<comment type="sequence caution" evidence="6">
    <conflict type="erroneous initiation">
        <sequence resource="EMBL-CDS" id="CAH92815"/>
    </conflict>
    <text>Truncated N-terminus.</text>
</comment>
<name>VAPA_PONAB</name>
<feature type="initiator methionine" description="Removed" evidence="1">
    <location>
        <position position="1"/>
    </location>
</feature>
<feature type="chain" id="PRO_0000228847" description="Vesicle-associated membrane protein-associated protein A">
    <location>
        <begin position="2"/>
        <end position="249"/>
    </location>
</feature>
<feature type="topological domain" description="Cytoplasmic" evidence="3">
    <location>
        <begin position="2"/>
        <end position="227"/>
    </location>
</feature>
<feature type="transmembrane region" description="Helical; Anchor for type IV membrane protein" evidence="3">
    <location>
        <begin position="228"/>
        <end position="248"/>
    </location>
</feature>
<feature type="domain" description="MSP" evidence="4">
    <location>
        <begin position="14"/>
        <end position="131"/>
    </location>
</feature>
<feature type="region of interest" description="phosphorylated FFAT motif binding" evidence="1">
    <location>
        <begin position="50"/>
        <end position="53"/>
    </location>
</feature>
<feature type="region of interest" description="Disordered" evidence="5">
    <location>
        <begin position="135"/>
        <end position="167"/>
    </location>
</feature>
<feature type="coiled-coil region" evidence="3">
    <location>
        <begin position="169"/>
        <end position="205"/>
    </location>
</feature>
<feature type="compositionally biased region" description="Basic and acidic residues" evidence="5">
    <location>
        <begin position="135"/>
        <end position="144"/>
    </location>
</feature>
<feature type="site" description="Involved in binding the phosphorylated serine of the phospho-FFAT motif" evidence="1">
    <location>
        <position position="50"/>
    </location>
</feature>
<feature type="modified residue" description="N-acetylalanine" evidence="1">
    <location>
        <position position="2"/>
    </location>
</feature>
<feature type="modified residue" description="N6-acetyllysine" evidence="1">
    <location>
        <position position="125"/>
    </location>
</feature>
<feature type="modified residue" description="Phosphoserine" evidence="1">
    <location>
        <position position="166"/>
    </location>
</feature>
<feature type="modified residue" description="Phosphothreonine" evidence="1">
    <location>
        <position position="170"/>
    </location>
</feature>
<feature type="modified residue" description="Phosphoserine" evidence="1">
    <location>
        <position position="214"/>
    </location>
</feature>
<feature type="modified residue" description="Phosphoserine" evidence="1">
    <location>
        <position position="216"/>
    </location>
</feature>
<feature type="modified residue" description="Phosphoserine" evidence="1">
    <location>
        <position position="219"/>
    </location>
</feature>
<feature type="disulfide bond" description="Interchain" evidence="1">
    <location>
        <position position="60"/>
    </location>
</feature>
<keyword id="KW-0007">Acetylation</keyword>
<keyword id="KW-0965">Cell junction</keyword>
<keyword id="KW-1003">Cell membrane</keyword>
<keyword id="KW-0175">Coiled coil</keyword>
<keyword id="KW-1015">Disulfide bond</keyword>
<keyword id="KW-0256">Endoplasmic reticulum</keyword>
<keyword id="KW-0472">Membrane</keyword>
<keyword id="KW-0539">Nucleus</keyword>
<keyword id="KW-0597">Phosphoprotein</keyword>
<keyword id="KW-1185">Reference proteome</keyword>
<keyword id="KW-0796">Tight junction</keyword>
<keyword id="KW-0812">Transmembrane</keyword>
<keyword id="KW-1133">Transmembrane helix</keyword>
<reference key="1">
    <citation type="submission" date="2004-11" db="EMBL/GenBank/DDBJ databases">
        <authorList>
            <consortium name="The German cDNA consortium"/>
        </authorList>
    </citation>
    <scope>NUCLEOTIDE SEQUENCE [LARGE SCALE MRNA]</scope>
    <source>
        <tissue>Brain cortex</tissue>
    </source>
</reference>
<sequence length="249" mass="27893">MASASGAMAKHEQILVLDPPTDLKFKGPFTDVVTTNLKLRNPSDRKVCFKVKTTAPRRYCVRPNSGIIDPGSTVTVSVMLQPFDYDPNEKSKHKFMVQTIFAPPNTSDMEAVWKEAKPDELMDSKLRCVFEMPNENDKLNDMEPSKAVPLNASKQDGPMPKPHSVSLNDTETRKLMEECKRLQGEMMKLSEENRHLRDEGLRLRKVAHSDKPGSTSTASFRDNVTSPLPSLLVVIAAIFIGFFLGKFIL</sequence>
<protein>
    <recommendedName>
        <fullName evidence="1">Vesicle-associated membrane protein-associated protein A</fullName>
        <shortName>VAMP-A</shortName>
        <shortName>VAMP-associated protein A</shortName>
        <shortName>VAP-A</shortName>
    </recommendedName>
</protein>
<dbReference type="EMBL" id="CR860699">
    <property type="protein sequence ID" value="CAH92815.1"/>
    <property type="status" value="ALT_INIT"/>
    <property type="molecule type" value="mRNA"/>
</dbReference>
<dbReference type="RefSeq" id="NP_001126643.1">
    <property type="nucleotide sequence ID" value="NM_001133171.1"/>
</dbReference>
<dbReference type="SMR" id="Q5R601"/>
<dbReference type="FunCoup" id="Q5R601">
    <property type="interactions" value="3246"/>
</dbReference>
<dbReference type="STRING" id="9601.ENSPPYP00000010103"/>
<dbReference type="Ensembl" id="ENSPPYT00000010506.2">
    <property type="protein sequence ID" value="ENSPPYP00000010104.1"/>
    <property type="gene ID" value="ENSPPYG00000009006.3"/>
</dbReference>
<dbReference type="GeneID" id="100173641"/>
<dbReference type="KEGG" id="pon:100173641"/>
<dbReference type="CTD" id="9218"/>
<dbReference type="GeneTree" id="ENSGT00940000154799"/>
<dbReference type="HOGENOM" id="CLU_032848_0_1_1"/>
<dbReference type="InParanoid" id="Q5R601"/>
<dbReference type="OrthoDB" id="264603at2759"/>
<dbReference type="Proteomes" id="UP000001595">
    <property type="component" value="Chromosome 18"/>
</dbReference>
<dbReference type="GO" id="GO:0005923">
    <property type="term" value="C:bicellular tight junction"/>
    <property type="evidence" value="ECO:0007669"/>
    <property type="project" value="UniProtKB-SubCell"/>
</dbReference>
<dbReference type="GO" id="GO:0005783">
    <property type="term" value="C:endoplasmic reticulum"/>
    <property type="evidence" value="ECO:0000250"/>
    <property type="project" value="UniProtKB"/>
</dbReference>
<dbReference type="GO" id="GO:0005789">
    <property type="term" value="C:endoplasmic reticulum membrane"/>
    <property type="evidence" value="ECO:0000250"/>
    <property type="project" value="UniProtKB"/>
</dbReference>
<dbReference type="GO" id="GO:0031965">
    <property type="term" value="C:nuclear membrane"/>
    <property type="evidence" value="ECO:0007669"/>
    <property type="project" value="UniProtKB-SubCell"/>
</dbReference>
<dbReference type="GO" id="GO:0005886">
    <property type="term" value="C:plasma membrane"/>
    <property type="evidence" value="ECO:0007669"/>
    <property type="project" value="UniProtKB-SubCell"/>
</dbReference>
<dbReference type="GO" id="GO:0033149">
    <property type="term" value="F:FFAT motif binding"/>
    <property type="evidence" value="ECO:0007669"/>
    <property type="project" value="TreeGrafter"/>
</dbReference>
<dbReference type="GO" id="GO:0031175">
    <property type="term" value="P:neuron projection development"/>
    <property type="evidence" value="ECO:0000250"/>
    <property type="project" value="UniProtKB"/>
</dbReference>
<dbReference type="GO" id="GO:0070972">
    <property type="term" value="P:protein localization to endoplasmic reticulum"/>
    <property type="evidence" value="ECO:0000250"/>
    <property type="project" value="UniProtKB"/>
</dbReference>
<dbReference type="FunFam" id="2.60.40.10:FF:000334">
    <property type="entry name" value="vesicle-associated membrane protein-associated protein A isoform X1"/>
    <property type="match status" value="1"/>
</dbReference>
<dbReference type="Gene3D" id="2.60.40.10">
    <property type="entry name" value="Immunoglobulins"/>
    <property type="match status" value="1"/>
</dbReference>
<dbReference type="InterPro" id="IPR013783">
    <property type="entry name" value="Ig-like_fold"/>
</dbReference>
<dbReference type="InterPro" id="IPR000535">
    <property type="entry name" value="MSP_dom"/>
</dbReference>
<dbReference type="InterPro" id="IPR008962">
    <property type="entry name" value="PapD-like_sf"/>
</dbReference>
<dbReference type="InterPro" id="IPR016763">
    <property type="entry name" value="VAP"/>
</dbReference>
<dbReference type="PANTHER" id="PTHR10809">
    <property type="entry name" value="VESICLE-ASSOCIATED MEMBRANE PROTEIN-ASSOCIATED PROTEIN"/>
    <property type="match status" value="1"/>
</dbReference>
<dbReference type="PANTHER" id="PTHR10809:SF155">
    <property type="entry name" value="VESICLE-ASSOCIATED MEMBRANE PROTEIN-ASSOCIATED PROTEIN A"/>
    <property type="match status" value="1"/>
</dbReference>
<dbReference type="Pfam" id="PF00635">
    <property type="entry name" value="Motile_Sperm"/>
    <property type="match status" value="1"/>
</dbReference>
<dbReference type="PIRSF" id="PIRSF019693">
    <property type="entry name" value="VAMP-associated"/>
    <property type="match status" value="1"/>
</dbReference>
<dbReference type="SUPFAM" id="SSF49354">
    <property type="entry name" value="PapD-like"/>
    <property type="match status" value="1"/>
</dbReference>
<dbReference type="PROSITE" id="PS50202">
    <property type="entry name" value="MSP"/>
    <property type="match status" value="1"/>
</dbReference>